<dbReference type="EMBL" id="AE017221">
    <property type="protein sequence ID" value="AAS82084.1"/>
    <property type="molecule type" value="Genomic_DNA"/>
</dbReference>
<dbReference type="RefSeq" id="WP_008630522.1">
    <property type="nucleotide sequence ID" value="NC_005835.1"/>
</dbReference>
<dbReference type="PDB" id="4KVB">
    <property type="method" value="X-ray"/>
    <property type="resolution" value="4.20 A"/>
    <property type="chains" value="R=1-88"/>
</dbReference>
<dbReference type="PDB" id="4V4I">
    <property type="method" value="X-ray"/>
    <property type="resolution" value="3.71 A"/>
    <property type="chains" value="s=1-88"/>
</dbReference>
<dbReference type="PDB" id="4V4J">
    <property type="method" value="X-ray"/>
    <property type="resolution" value="3.83 A"/>
    <property type="chains" value="s=1-88"/>
</dbReference>
<dbReference type="PDB" id="4V5L">
    <property type="method" value="X-ray"/>
    <property type="resolution" value="3.10 A"/>
    <property type="chains" value="AR=1-88"/>
</dbReference>
<dbReference type="PDB" id="4V63">
    <property type="method" value="X-ray"/>
    <property type="resolution" value="3.21 A"/>
    <property type="chains" value="AR/CR=1-88"/>
</dbReference>
<dbReference type="PDB" id="4V67">
    <property type="method" value="X-ray"/>
    <property type="resolution" value="3.00 A"/>
    <property type="chains" value="AR/CR=1-88"/>
</dbReference>
<dbReference type="PDB" id="4V7P">
    <property type="method" value="X-ray"/>
    <property type="resolution" value="3.62 A"/>
    <property type="chains" value="AR/DR=19-88"/>
</dbReference>
<dbReference type="PDB" id="4V83">
    <property type="method" value="X-ray"/>
    <property type="resolution" value="3.50 A"/>
    <property type="chains" value="AR/CR=19-88"/>
</dbReference>
<dbReference type="PDB" id="4V84">
    <property type="method" value="X-ray"/>
    <property type="resolution" value="3.40 A"/>
    <property type="chains" value="AR/CR=19-88"/>
</dbReference>
<dbReference type="PDB" id="4V9J">
    <property type="method" value="X-ray"/>
    <property type="resolution" value="3.86 A"/>
    <property type="chains" value="AR/CR=19-88"/>
</dbReference>
<dbReference type="PDB" id="4V9K">
    <property type="method" value="X-ray"/>
    <property type="resolution" value="3.50 A"/>
    <property type="chains" value="AR/CR=19-88"/>
</dbReference>
<dbReference type="PDB" id="4V9L">
    <property type="method" value="X-ray"/>
    <property type="resolution" value="3.50 A"/>
    <property type="chains" value="AR/CR=19-88"/>
</dbReference>
<dbReference type="PDB" id="4V9M">
    <property type="method" value="X-ray"/>
    <property type="resolution" value="4.00 A"/>
    <property type="chains" value="AR/CR=19-88"/>
</dbReference>
<dbReference type="PDB" id="4V9N">
    <property type="method" value="X-ray"/>
    <property type="resolution" value="3.40 A"/>
    <property type="chains" value="AR/CR=19-88"/>
</dbReference>
<dbReference type="PDB" id="4V9Q">
    <property type="method" value="X-ray"/>
    <property type="resolution" value="3.40 A"/>
    <property type="chains" value="BR/DR=19-88"/>
</dbReference>
<dbReference type="PDB" id="4W29">
    <property type="method" value="X-ray"/>
    <property type="resolution" value="3.80 A"/>
    <property type="chains" value="AR/CR=19-88"/>
</dbReference>
<dbReference type="PDB" id="4XEJ">
    <property type="method" value="X-ray"/>
    <property type="resolution" value="3.80 A"/>
    <property type="chains" value="AS18/BS18=19-88"/>
</dbReference>
<dbReference type="PDB" id="5J4D">
    <property type="method" value="X-ray"/>
    <property type="resolution" value="3.10 A"/>
    <property type="chains" value="AB/FD=1-88"/>
</dbReference>
<dbReference type="PDB" id="5V8I">
    <property type="method" value="X-ray"/>
    <property type="resolution" value="3.25 A"/>
    <property type="chains" value="1r/2r=1-88"/>
</dbReference>
<dbReference type="PDB" id="6B4V">
    <property type="method" value="X-ray"/>
    <property type="resolution" value="3.40 A"/>
    <property type="chains" value="AB/ED=1-88"/>
</dbReference>
<dbReference type="PDB" id="6BOH">
    <property type="method" value="X-ray"/>
    <property type="resolution" value="3.40 A"/>
    <property type="chains" value="BB/GD=1-88"/>
</dbReference>
<dbReference type="PDB" id="6BOK">
    <property type="method" value="X-ray"/>
    <property type="resolution" value="3.55 A"/>
    <property type="chains" value="CD/ZA=1-88"/>
</dbReference>
<dbReference type="PDB" id="6N1D">
    <property type="method" value="X-ray"/>
    <property type="resolution" value="3.20 A"/>
    <property type="chains" value="AS18/BS18=2-88"/>
</dbReference>
<dbReference type="PDBsum" id="4KVB"/>
<dbReference type="PDBsum" id="4V4I"/>
<dbReference type="PDBsum" id="4V4J"/>
<dbReference type="PDBsum" id="4V5L"/>
<dbReference type="PDBsum" id="4V63"/>
<dbReference type="PDBsum" id="4V67"/>
<dbReference type="PDBsum" id="4V7P"/>
<dbReference type="PDBsum" id="4V83"/>
<dbReference type="PDBsum" id="4V84"/>
<dbReference type="PDBsum" id="4V9J"/>
<dbReference type="PDBsum" id="4V9K"/>
<dbReference type="PDBsum" id="4V9L"/>
<dbReference type="PDBsum" id="4V9M"/>
<dbReference type="PDBsum" id="4V9N"/>
<dbReference type="PDBsum" id="4V9Q"/>
<dbReference type="PDBsum" id="4W29"/>
<dbReference type="PDBsum" id="4XEJ"/>
<dbReference type="PDBsum" id="5J4D"/>
<dbReference type="PDBsum" id="5V8I"/>
<dbReference type="PDBsum" id="6B4V"/>
<dbReference type="PDBsum" id="6BOH"/>
<dbReference type="PDBsum" id="6BOK"/>
<dbReference type="PDBsum" id="6N1D"/>
<dbReference type="SMR" id="P62659"/>
<dbReference type="IntAct" id="P62659">
    <property type="interactions" value="4"/>
</dbReference>
<dbReference type="GeneID" id="3169870"/>
<dbReference type="KEGG" id="tth:TT_C1742"/>
<dbReference type="eggNOG" id="COG0238">
    <property type="taxonomic scope" value="Bacteria"/>
</dbReference>
<dbReference type="HOGENOM" id="CLU_148710_0_3_0"/>
<dbReference type="OrthoDB" id="9812008at2"/>
<dbReference type="EvolutionaryTrace" id="P62659"/>
<dbReference type="Proteomes" id="UP000000592">
    <property type="component" value="Chromosome"/>
</dbReference>
<dbReference type="GO" id="GO:1990904">
    <property type="term" value="C:ribonucleoprotein complex"/>
    <property type="evidence" value="ECO:0007669"/>
    <property type="project" value="UniProtKB-KW"/>
</dbReference>
<dbReference type="GO" id="GO:0005840">
    <property type="term" value="C:ribosome"/>
    <property type="evidence" value="ECO:0007669"/>
    <property type="project" value="UniProtKB-KW"/>
</dbReference>
<dbReference type="GO" id="GO:0070181">
    <property type="term" value="F:small ribosomal subunit rRNA binding"/>
    <property type="evidence" value="ECO:0007669"/>
    <property type="project" value="TreeGrafter"/>
</dbReference>
<dbReference type="GO" id="GO:0003735">
    <property type="term" value="F:structural constituent of ribosome"/>
    <property type="evidence" value="ECO:0007669"/>
    <property type="project" value="InterPro"/>
</dbReference>
<dbReference type="GO" id="GO:0006412">
    <property type="term" value="P:translation"/>
    <property type="evidence" value="ECO:0007669"/>
    <property type="project" value="UniProtKB-UniRule"/>
</dbReference>
<dbReference type="FunFam" id="4.10.640.10:FF:000015">
    <property type="entry name" value="30S ribosomal protein S18"/>
    <property type="match status" value="1"/>
</dbReference>
<dbReference type="Gene3D" id="4.10.640.10">
    <property type="entry name" value="Ribosomal protein S18"/>
    <property type="match status" value="1"/>
</dbReference>
<dbReference type="HAMAP" id="MF_00270">
    <property type="entry name" value="Ribosomal_bS18"/>
    <property type="match status" value="1"/>
</dbReference>
<dbReference type="InterPro" id="IPR001648">
    <property type="entry name" value="Ribosomal_bS18"/>
</dbReference>
<dbReference type="InterPro" id="IPR018275">
    <property type="entry name" value="Ribosomal_bS18_CS"/>
</dbReference>
<dbReference type="InterPro" id="IPR036870">
    <property type="entry name" value="Ribosomal_bS18_sf"/>
</dbReference>
<dbReference type="NCBIfam" id="TIGR00165">
    <property type="entry name" value="S18"/>
    <property type="match status" value="1"/>
</dbReference>
<dbReference type="PANTHER" id="PTHR13479">
    <property type="entry name" value="30S RIBOSOMAL PROTEIN S18"/>
    <property type="match status" value="1"/>
</dbReference>
<dbReference type="PANTHER" id="PTHR13479:SF40">
    <property type="entry name" value="SMALL RIBOSOMAL SUBUNIT PROTEIN BS18M"/>
    <property type="match status" value="1"/>
</dbReference>
<dbReference type="Pfam" id="PF01084">
    <property type="entry name" value="Ribosomal_S18"/>
    <property type="match status" value="1"/>
</dbReference>
<dbReference type="PRINTS" id="PR00974">
    <property type="entry name" value="RIBOSOMALS18"/>
</dbReference>
<dbReference type="SUPFAM" id="SSF46911">
    <property type="entry name" value="Ribosomal protein S18"/>
    <property type="match status" value="1"/>
</dbReference>
<dbReference type="PROSITE" id="PS00057">
    <property type="entry name" value="RIBOSOMAL_S18"/>
    <property type="match status" value="1"/>
</dbReference>
<feature type="initiator methionine" description="Removed" evidence="1">
    <location>
        <position position="1"/>
    </location>
</feature>
<feature type="chain" id="PRO_0000111249" description="Small ribosomal subunit protein bS18">
    <location>
        <begin position="2"/>
        <end position="88"/>
    </location>
</feature>
<feature type="region of interest" description="Disordered" evidence="3">
    <location>
        <begin position="1"/>
        <end position="22"/>
    </location>
</feature>
<feature type="helix" evidence="5">
    <location>
        <begin position="22"/>
        <end position="25"/>
    </location>
</feature>
<feature type="strand" evidence="5">
    <location>
        <begin position="28"/>
        <end position="30"/>
    </location>
</feature>
<feature type="helix" evidence="5">
    <location>
        <begin position="37"/>
        <end position="42"/>
    </location>
</feature>
<feature type="turn" evidence="5">
    <location>
        <begin position="43"/>
        <end position="47"/>
    </location>
</feature>
<feature type="helix" evidence="5">
    <location>
        <begin position="53"/>
        <end position="56"/>
    </location>
</feature>
<feature type="helix" evidence="5">
    <location>
        <begin position="60"/>
        <end position="73"/>
    </location>
</feature>
<feature type="turn" evidence="5">
    <location>
        <begin position="74"/>
        <end position="77"/>
    </location>
</feature>
<keyword id="KW-0002">3D-structure</keyword>
<keyword id="KW-0687">Ribonucleoprotein</keyword>
<keyword id="KW-0689">Ribosomal protein</keyword>
<keyword id="KW-0694">RNA-binding</keyword>
<keyword id="KW-0699">rRNA-binding</keyword>
<accession>P62659</accession>
<reference key="1">
    <citation type="journal article" date="2004" name="Nat. Biotechnol.">
        <title>The genome sequence of the extreme thermophile Thermus thermophilus.</title>
        <authorList>
            <person name="Henne A."/>
            <person name="Brueggemann H."/>
            <person name="Raasch C."/>
            <person name="Wiezer A."/>
            <person name="Hartsch T."/>
            <person name="Liesegang H."/>
            <person name="Johann A."/>
            <person name="Lienard T."/>
            <person name="Gohl O."/>
            <person name="Martinez-Arias R."/>
            <person name="Jacobi C."/>
            <person name="Starkuviene V."/>
            <person name="Schlenczeck S."/>
            <person name="Dencker S."/>
            <person name="Huber R."/>
            <person name="Klenk H.-P."/>
            <person name="Kramer W."/>
            <person name="Merkl R."/>
            <person name="Gottschalk G."/>
            <person name="Fritz H.-J."/>
        </authorList>
    </citation>
    <scope>NUCLEOTIDE SEQUENCE [LARGE SCALE GENOMIC DNA]</scope>
    <source>
        <strain>ATCC BAA-163 / DSM 7039 / HB27</strain>
    </source>
</reference>
<sequence length="88" mass="10231">MSTKNAKPKKEAQRRPSRKAKVKATLGEFDLRDYRNVEVLKRFLSETGKILPRRRTGLSAKEQRILAKTIKRARILGLLPFTEKLVRK</sequence>
<organism>
    <name type="scientific">Thermus thermophilus (strain ATCC BAA-163 / DSM 7039 / HB27)</name>
    <dbReference type="NCBI Taxonomy" id="262724"/>
    <lineage>
        <taxon>Bacteria</taxon>
        <taxon>Thermotogati</taxon>
        <taxon>Deinococcota</taxon>
        <taxon>Deinococci</taxon>
        <taxon>Thermales</taxon>
        <taxon>Thermaceae</taxon>
        <taxon>Thermus</taxon>
    </lineage>
</organism>
<comment type="function">
    <text evidence="2">Binds as a heterodimer with protein bS6 to the central domain of the 16S rRNA, where it helps stabilize the platform of the 30S subunit.</text>
</comment>
<comment type="subunit">
    <text evidence="2">Part of the 30S ribosomal subunit. Forms a tight heterodimer with protein bS6.</text>
</comment>
<comment type="similarity">
    <text evidence="4">Belongs to the bacterial ribosomal protein bS18 family.</text>
</comment>
<evidence type="ECO:0000250" key="1"/>
<evidence type="ECO:0000255" key="2">
    <source>
        <dbReference type="HAMAP-Rule" id="MF_00270"/>
    </source>
</evidence>
<evidence type="ECO:0000256" key="3">
    <source>
        <dbReference type="SAM" id="MobiDB-lite"/>
    </source>
</evidence>
<evidence type="ECO:0000305" key="4"/>
<evidence type="ECO:0007829" key="5">
    <source>
        <dbReference type="PDB" id="4V67"/>
    </source>
</evidence>
<protein>
    <recommendedName>
        <fullName evidence="4">Small ribosomal subunit protein bS18</fullName>
    </recommendedName>
    <alternativeName>
        <fullName>30S ribosomal protein S18</fullName>
    </alternativeName>
</protein>
<gene>
    <name type="primary">rpsR</name>
    <name type="synonym">rps18</name>
    <name type="ordered locus">TT_C1742</name>
</gene>
<proteinExistence type="evidence at protein level"/>
<name>RS18_THET2</name>